<protein>
    <recommendedName>
        <fullName evidence="1">Bifunctional glutamine synthetase adenylyltransferase/adenylyl-removing enzyme</fullName>
    </recommendedName>
    <alternativeName>
        <fullName evidence="1">ATP:glutamine synthetase adenylyltransferase</fullName>
    </alternativeName>
    <alternativeName>
        <fullName evidence="1">ATase</fullName>
    </alternativeName>
    <domain>
        <recommendedName>
            <fullName evidence="1">Glutamine synthetase adenylyl-L-tyrosine phosphorylase</fullName>
            <ecNumber evidence="1">2.7.7.89</ecNumber>
        </recommendedName>
        <alternativeName>
            <fullName evidence="1">Adenylyl removase</fullName>
            <shortName evidence="1">AR</shortName>
            <shortName evidence="1">AT-N</shortName>
        </alternativeName>
    </domain>
    <domain>
        <recommendedName>
            <fullName evidence="1">Glutamine synthetase adenylyl transferase</fullName>
            <ecNumber evidence="1">2.7.7.42</ecNumber>
        </recommendedName>
        <alternativeName>
            <fullName evidence="1">Adenylyl transferase</fullName>
            <shortName evidence="1">AT</shortName>
            <shortName evidence="1">AT-C</shortName>
        </alternativeName>
    </domain>
</protein>
<dbReference type="EC" id="2.7.7.89" evidence="1"/>
<dbReference type="EC" id="2.7.7.42" evidence="1"/>
<dbReference type="EMBL" id="CP001113">
    <property type="protein sequence ID" value="ACF65112.1"/>
    <property type="molecule type" value="Genomic_DNA"/>
</dbReference>
<dbReference type="RefSeq" id="WP_000188302.1">
    <property type="nucleotide sequence ID" value="NZ_CCMR01000001.1"/>
</dbReference>
<dbReference type="SMR" id="B4T671"/>
<dbReference type="KEGG" id="see:SNSL254_A3461"/>
<dbReference type="HOGENOM" id="CLU_006233_0_1_6"/>
<dbReference type="Proteomes" id="UP000008824">
    <property type="component" value="Chromosome"/>
</dbReference>
<dbReference type="GO" id="GO:0005829">
    <property type="term" value="C:cytosol"/>
    <property type="evidence" value="ECO:0007669"/>
    <property type="project" value="TreeGrafter"/>
</dbReference>
<dbReference type="GO" id="GO:0008882">
    <property type="term" value="F:[glutamate-ammonia-ligase] adenylyltransferase activity"/>
    <property type="evidence" value="ECO:0007669"/>
    <property type="project" value="UniProtKB-UniRule"/>
</dbReference>
<dbReference type="GO" id="GO:0047388">
    <property type="term" value="F:[glutamine synthetase]-adenylyl-L-tyrosine phosphorylase activity"/>
    <property type="evidence" value="ECO:0007669"/>
    <property type="project" value="UniProtKB-EC"/>
</dbReference>
<dbReference type="GO" id="GO:0005524">
    <property type="term" value="F:ATP binding"/>
    <property type="evidence" value="ECO:0007669"/>
    <property type="project" value="UniProtKB-UniRule"/>
</dbReference>
<dbReference type="GO" id="GO:0000287">
    <property type="term" value="F:magnesium ion binding"/>
    <property type="evidence" value="ECO:0007669"/>
    <property type="project" value="UniProtKB-UniRule"/>
</dbReference>
<dbReference type="GO" id="GO:0000820">
    <property type="term" value="P:regulation of glutamine family amino acid metabolic process"/>
    <property type="evidence" value="ECO:0007669"/>
    <property type="project" value="UniProtKB-UniRule"/>
</dbReference>
<dbReference type="CDD" id="cd05401">
    <property type="entry name" value="NT_GlnE_GlnD_like"/>
    <property type="match status" value="2"/>
</dbReference>
<dbReference type="FunFam" id="1.10.4050.10:FF:000001">
    <property type="entry name" value="Bifunctional glutamine synthetase adenylyltransferase/adenylyl-removing enzyme"/>
    <property type="match status" value="1"/>
</dbReference>
<dbReference type="FunFam" id="1.20.120.1510:FF:000001">
    <property type="entry name" value="Bifunctional glutamine synthetase adenylyltransferase/adenylyl-removing enzyme"/>
    <property type="match status" value="1"/>
</dbReference>
<dbReference type="FunFam" id="1.20.120.330:FF:000005">
    <property type="entry name" value="Bifunctional glutamine synthetase adenylyltransferase/adenylyl-removing enzyme"/>
    <property type="match status" value="1"/>
</dbReference>
<dbReference type="FunFam" id="1.20.120.330:FF:000008">
    <property type="entry name" value="Bifunctional glutamine synthetase adenylyltransferase/adenylyl-removing enzyme"/>
    <property type="match status" value="1"/>
</dbReference>
<dbReference type="FunFam" id="3.30.460.10:FF:000009">
    <property type="entry name" value="Bifunctional glutamine synthetase adenylyltransferase/adenylyl-removing enzyme"/>
    <property type="match status" value="1"/>
</dbReference>
<dbReference type="FunFam" id="3.30.460.10:FF:000014">
    <property type="entry name" value="Bifunctional glutamine synthetase adenylyltransferase/adenylyl-removing enzyme"/>
    <property type="match status" value="1"/>
</dbReference>
<dbReference type="Gene3D" id="1.20.120.1510">
    <property type="match status" value="1"/>
</dbReference>
<dbReference type="Gene3D" id="3.30.460.10">
    <property type="entry name" value="Beta Polymerase, domain 2"/>
    <property type="match status" value="2"/>
</dbReference>
<dbReference type="Gene3D" id="1.10.4050.10">
    <property type="entry name" value="Glutamine synthase adenylyltransferase GlnE"/>
    <property type="match status" value="1"/>
</dbReference>
<dbReference type="Gene3D" id="1.20.120.330">
    <property type="entry name" value="Nucleotidyltransferases domain 2"/>
    <property type="match status" value="2"/>
</dbReference>
<dbReference type="HAMAP" id="MF_00802">
    <property type="entry name" value="GlnE"/>
    <property type="match status" value="1"/>
</dbReference>
<dbReference type="InterPro" id="IPR023057">
    <property type="entry name" value="GlnE"/>
</dbReference>
<dbReference type="InterPro" id="IPR005190">
    <property type="entry name" value="GlnE_rpt_dom"/>
</dbReference>
<dbReference type="InterPro" id="IPR043519">
    <property type="entry name" value="NT_sf"/>
</dbReference>
<dbReference type="InterPro" id="IPR013546">
    <property type="entry name" value="PII_UdlTrfase/GS_AdlTrfase"/>
</dbReference>
<dbReference type="NCBIfam" id="NF008292">
    <property type="entry name" value="PRK11072.1"/>
    <property type="match status" value="1"/>
</dbReference>
<dbReference type="PANTHER" id="PTHR30621:SF0">
    <property type="entry name" value="BIFUNCTIONAL GLUTAMINE SYNTHETASE ADENYLYLTRANSFERASE_ADENYLYL-REMOVING ENZYME"/>
    <property type="match status" value="1"/>
</dbReference>
<dbReference type="PANTHER" id="PTHR30621">
    <property type="entry name" value="GLUTAMINE SYNTHETASE ADENYLYLTRANSFERASE"/>
    <property type="match status" value="1"/>
</dbReference>
<dbReference type="Pfam" id="PF08335">
    <property type="entry name" value="GlnD_UR_UTase"/>
    <property type="match status" value="2"/>
</dbReference>
<dbReference type="Pfam" id="PF03710">
    <property type="entry name" value="GlnE"/>
    <property type="match status" value="2"/>
</dbReference>
<dbReference type="SUPFAM" id="SSF81301">
    <property type="entry name" value="Nucleotidyltransferase"/>
    <property type="match status" value="2"/>
</dbReference>
<dbReference type="SUPFAM" id="SSF81593">
    <property type="entry name" value="Nucleotidyltransferase substrate binding subunit/domain"/>
    <property type="match status" value="2"/>
</dbReference>
<comment type="function">
    <text evidence="1">Involved in the regulation of glutamine synthetase GlnA, a key enzyme in the process to assimilate ammonia. When cellular nitrogen levels are high, the C-terminal adenylyl transferase (AT) inactivates GlnA by covalent transfer of an adenylyl group from ATP to specific tyrosine residue of GlnA, thus reducing its activity. Conversely, when nitrogen levels are low, the N-terminal adenylyl removase (AR) activates GlnA by removing the adenylyl group by phosphorolysis, increasing its activity. The regulatory region of GlnE binds the signal transduction protein PII (GlnB) which indicates the nitrogen status of the cell.</text>
</comment>
<comment type="catalytic activity">
    <reaction evidence="1">
        <text>[glutamine synthetase]-O(4)-(5'-adenylyl)-L-tyrosine + phosphate = [glutamine synthetase]-L-tyrosine + ADP</text>
        <dbReference type="Rhea" id="RHEA:43716"/>
        <dbReference type="Rhea" id="RHEA-COMP:10660"/>
        <dbReference type="Rhea" id="RHEA-COMP:10661"/>
        <dbReference type="ChEBI" id="CHEBI:43474"/>
        <dbReference type="ChEBI" id="CHEBI:46858"/>
        <dbReference type="ChEBI" id="CHEBI:83624"/>
        <dbReference type="ChEBI" id="CHEBI:456216"/>
        <dbReference type="EC" id="2.7.7.89"/>
    </reaction>
</comment>
<comment type="catalytic activity">
    <reaction evidence="1">
        <text>[glutamine synthetase]-L-tyrosine + ATP = [glutamine synthetase]-O(4)-(5'-adenylyl)-L-tyrosine + diphosphate</text>
        <dbReference type="Rhea" id="RHEA:18589"/>
        <dbReference type="Rhea" id="RHEA-COMP:10660"/>
        <dbReference type="Rhea" id="RHEA-COMP:10661"/>
        <dbReference type="ChEBI" id="CHEBI:30616"/>
        <dbReference type="ChEBI" id="CHEBI:33019"/>
        <dbReference type="ChEBI" id="CHEBI:46858"/>
        <dbReference type="ChEBI" id="CHEBI:83624"/>
        <dbReference type="EC" id="2.7.7.42"/>
    </reaction>
</comment>
<comment type="cofactor">
    <cofactor evidence="1">
        <name>Mg(2+)</name>
        <dbReference type="ChEBI" id="CHEBI:18420"/>
    </cofactor>
</comment>
<comment type="similarity">
    <text evidence="1">Belongs to the GlnE family.</text>
</comment>
<name>GLNE_SALNS</name>
<feature type="chain" id="PRO_1000133915" description="Bifunctional glutamine synthetase adenylyltransferase/adenylyl-removing enzyme">
    <location>
        <begin position="1"/>
        <end position="947"/>
    </location>
</feature>
<feature type="region of interest" description="Adenylyl removase" evidence="1">
    <location>
        <begin position="1"/>
        <end position="440"/>
    </location>
</feature>
<feature type="region of interest" description="Adenylyl transferase" evidence="1">
    <location>
        <begin position="450"/>
        <end position="947"/>
    </location>
</feature>
<evidence type="ECO:0000255" key="1">
    <source>
        <dbReference type="HAMAP-Rule" id="MF_00802"/>
    </source>
</evidence>
<reference key="1">
    <citation type="journal article" date="2011" name="J. Bacteriol.">
        <title>Comparative genomics of 28 Salmonella enterica isolates: evidence for CRISPR-mediated adaptive sublineage evolution.</title>
        <authorList>
            <person name="Fricke W.F."/>
            <person name="Mammel M.K."/>
            <person name="McDermott P.F."/>
            <person name="Tartera C."/>
            <person name="White D.G."/>
            <person name="Leclerc J.E."/>
            <person name="Ravel J."/>
            <person name="Cebula T.A."/>
        </authorList>
    </citation>
    <scope>NUCLEOTIDE SEQUENCE [LARGE SCALE GENOMIC DNA]</scope>
    <source>
        <strain>SL254</strain>
    </source>
</reference>
<organism>
    <name type="scientific">Salmonella newport (strain SL254)</name>
    <dbReference type="NCBI Taxonomy" id="423368"/>
    <lineage>
        <taxon>Bacteria</taxon>
        <taxon>Pseudomonadati</taxon>
        <taxon>Pseudomonadota</taxon>
        <taxon>Gammaproteobacteria</taxon>
        <taxon>Enterobacterales</taxon>
        <taxon>Enterobacteriaceae</taxon>
        <taxon>Salmonella</taxon>
    </lineage>
</organism>
<accession>B4T671</accession>
<proteinExistence type="inferred from homology"/>
<gene>
    <name evidence="1" type="primary">glnE</name>
    <name type="ordered locus">SNSL254_A3461</name>
</gene>
<sequence length="947" mass="108085">MTPLSSPLSQYWQTVVERLPEGFTETSLSVQAKSVLTFSDFALDSVIAHPEWLAELESASPQADEWRHYAGWLQEALAGVCDDASLMRELRFFRRRIMVRIAWAQTLSLVDDETILQQLSHLAETLIVGARDWLYAACCREWGTPCNPQGVPQPLLILGMGKLGGGELNFSSDIDLIFAWPEHGETRGGRRELDNAQFFTRLGQRLIKALDQPTMDGFVYRVDMRLRPFGDSGPLVLSFAALEDYYQEQGRDWERYAMVKARLMGDNDDAWSRELRAMLRPFVFRRYIDFSVIQSLRNMKGMIAREVRRRGLKDNIKLGAGGIREIEFIVQVFQLIRGGREPSLQSRSLLPTLDAIAALHLLPENDVAQLRMAYLFLRRLENLLQSINDEQTQTLPADDLNRARLAWGMKAENWPQLVGELTDHMANVRRVFNELIGDDEADTPQEEERSEPWREVWQDALQEDDSTPVLAHLADEDRRQVLTLIADFRKELDKRPIGPRGRQVLDQLMPHLLADVCSREDAAVTLSRITPLLAGIVTRTTYLELLSEFPGALKHLIMLCAASPMIASQLARYPLLLDELLDPGTLYQPTATDAYRDELRQYLLRVPEEDEEQQLEALRQFKQAQLLRIAAADIAGTLPVMKVSDHLTWLAEAMIDAVVQQAWTQMVARYGQPAHLDERQGRGFAVVGYGKLGGWELGYSSDLDLIFLHDCPMDVMTNGEREIDGRQFYLRLAQRIMHLFSTRTSSGILYEVDARLRPSGAAGMLVTSADAFADYQQHEAWTWEHQALVRARVVYGDPQLTSQFDTVRRTIMTTARDGKTLQTEVREMREKMRAHLGNKHRDRFDIKADEGGITDIEFIAQYLVLRYAHEKPKLTRWSDNVRILELLAQNGIMDEHEAQALTVAYTTLRDELHHLALQELPGHVAQTCFSKERALVQASWRKWLVAV</sequence>
<keyword id="KW-0067">ATP-binding</keyword>
<keyword id="KW-0460">Magnesium</keyword>
<keyword id="KW-0511">Multifunctional enzyme</keyword>
<keyword id="KW-0547">Nucleotide-binding</keyword>
<keyword id="KW-0548">Nucleotidyltransferase</keyword>
<keyword id="KW-0808">Transferase</keyword>